<dbReference type="EC" id="3.6.5.3" evidence="2"/>
<dbReference type="EMBL" id="CP000703">
    <property type="protein sequence ID" value="ABQ48375.1"/>
    <property type="molecule type" value="Genomic_DNA"/>
</dbReference>
<dbReference type="RefSeq" id="WP_001040568.1">
    <property type="nucleotide sequence ID" value="NC_009487.1"/>
</dbReference>
<dbReference type="SMR" id="A5IQA2"/>
<dbReference type="KEGG" id="saj:SaurJH9_0571"/>
<dbReference type="HOGENOM" id="CLU_007265_0_0_9"/>
<dbReference type="GO" id="GO:0005829">
    <property type="term" value="C:cytosol"/>
    <property type="evidence" value="ECO:0007669"/>
    <property type="project" value="TreeGrafter"/>
</dbReference>
<dbReference type="GO" id="GO:0005525">
    <property type="term" value="F:GTP binding"/>
    <property type="evidence" value="ECO:0007669"/>
    <property type="project" value="UniProtKB-UniRule"/>
</dbReference>
<dbReference type="GO" id="GO:0003924">
    <property type="term" value="F:GTPase activity"/>
    <property type="evidence" value="ECO:0007669"/>
    <property type="project" value="InterPro"/>
</dbReference>
<dbReference type="GO" id="GO:0003746">
    <property type="term" value="F:translation elongation factor activity"/>
    <property type="evidence" value="ECO:0007669"/>
    <property type="project" value="UniProtKB-UniRule"/>
</dbReference>
<dbReference type="CDD" id="cd01884">
    <property type="entry name" value="EF_Tu"/>
    <property type="match status" value="1"/>
</dbReference>
<dbReference type="CDD" id="cd03697">
    <property type="entry name" value="EFTU_II"/>
    <property type="match status" value="1"/>
</dbReference>
<dbReference type="CDD" id="cd03707">
    <property type="entry name" value="EFTU_III"/>
    <property type="match status" value="1"/>
</dbReference>
<dbReference type="FunFam" id="2.40.30.10:FF:000001">
    <property type="entry name" value="Elongation factor Tu"/>
    <property type="match status" value="1"/>
</dbReference>
<dbReference type="FunFam" id="3.40.50.300:FF:000003">
    <property type="entry name" value="Elongation factor Tu"/>
    <property type="match status" value="1"/>
</dbReference>
<dbReference type="Gene3D" id="3.40.50.300">
    <property type="entry name" value="P-loop containing nucleotide triphosphate hydrolases"/>
    <property type="match status" value="1"/>
</dbReference>
<dbReference type="Gene3D" id="2.40.30.10">
    <property type="entry name" value="Translation factors"/>
    <property type="match status" value="2"/>
</dbReference>
<dbReference type="HAMAP" id="MF_00118_B">
    <property type="entry name" value="EF_Tu_B"/>
    <property type="match status" value="1"/>
</dbReference>
<dbReference type="InterPro" id="IPR041709">
    <property type="entry name" value="EF-Tu_GTP-bd"/>
</dbReference>
<dbReference type="InterPro" id="IPR050055">
    <property type="entry name" value="EF-Tu_GTPase"/>
</dbReference>
<dbReference type="InterPro" id="IPR004161">
    <property type="entry name" value="EFTu-like_2"/>
</dbReference>
<dbReference type="InterPro" id="IPR033720">
    <property type="entry name" value="EFTU_2"/>
</dbReference>
<dbReference type="InterPro" id="IPR031157">
    <property type="entry name" value="G_TR_CS"/>
</dbReference>
<dbReference type="InterPro" id="IPR027417">
    <property type="entry name" value="P-loop_NTPase"/>
</dbReference>
<dbReference type="InterPro" id="IPR005225">
    <property type="entry name" value="Small_GTP-bd"/>
</dbReference>
<dbReference type="InterPro" id="IPR000795">
    <property type="entry name" value="T_Tr_GTP-bd_dom"/>
</dbReference>
<dbReference type="InterPro" id="IPR009000">
    <property type="entry name" value="Transl_B-barrel_sf"/>
</dbReference>
<dbReference type="InterPro" id="IPR009001">
    <property type="entry name" value="Transl_elong_EF1A/Init_IF2_C"/>
</dbReference>
<dbReference type="InterPro" id="IPR004541">
    <property type="entry name" value="Transl_elong_EFTu/EF1A_bac/org"/>
</dbReference>
<dbReference type="InterPro" id="IPR004160">
    <property type="entry name" value="Transl_elong_EFTu/EF1A_C"/>
</dbReference>
<dbReference type="NCBIfam" id="TIGR00485">
    <property type="entry name" value="EF-Tu"/>
    <property type="match status" value="1"/>
</dbReference>
<dbReference type="NCBIfam" id="NF000766">
    <property type="entry name" value="PRK00049.1"/>
    <property type="match status" value="1"/>
</dbReference>
<dbReference type="NCBIfam" id="NF009372">
    <property type="entry name" value="PRK12735.1"/>
    <property type="match status" value="1"/>
</dbReference>
<dbReference type="NCBIfam" id="NF009373">
    <property type="entry name" value="PRK12736.1"/>
    <property type="match status" value="1"/>
</dbReference>
<dbReference type="NCBIfam" id="TIGR00231">
    <property type="entry name" value="small_GTP"/>
    <property type="match status" value="1"/>
</dbReference>
<dbReference type="PANTHER" id="PTHR43721:SF22">
    <property type="entry name" value="ELONGATION FACTOR TU, MITOCHONDRIAL"/>
    <property type="match status" value="1"/>
</dbReference>
<dbReference type="PANTHER" id="PTHR43721">
    <property type="entry name" value="ELONGATION FACTOR TU-RELATED"/>
    <property type="match status" value="1"/>
</dbReference>
<dbReference type="Pfam" id="PF00009">
    <property type="entry name" value="GTP_EFTU"/>
    <property type="match status" value="1"/>
</dbReference>
<dbReference type="Pfam" id="PF03144">
    <property type="entry name" value="GTP_EFTU_D2"/>
    <property type="match status" value="1"/>
</dbReference>
<dbReference type="Pfam" id="PF03143">
    <property type="entry name" value="GTP_EFTU_D3"/>
    <property type="match status" value="1"/>
</dbReference>
<dbReference type="PRINTS" id="PR00315">
    <property type="entry name" value="ELONGATNFCT"/>
</dbReference>
<dbReference type="SUPFAM" id="SSF50465">
    <property type="entry name" value="EF-Tu/eEF-1alpha/eIF2-gamma C-terminal domain"/>
    <property type="match status" value="1"/>
</dbReference>
<dbReference type="SUPFAM" id="SSF52540">
    <property type="entry name" value="P-loop containing nucleoside triphosphate hydrolases"/>
    <property type="match status" value="1"/>
</dbReference>
<dbReference type="SUPFAM" id="SSF50447">
    <property type="entry name" value="Translation proteins"/>
    <property type="match status" value="1"/>
</dbReference>
<dbReference type="PROSITE" id="PS00301">
    <property type="entry name" value="G_TR_1"/>
    <property type="match status" value="1"/>
</dbReference>
<dbReference type="PROSITE" id="PS51722">
    <property type="entry name" value="G_TR_2"/>
    <property type="match status" value="1"/>
</dbReference>
<organism>
    <name type="scientific">Staphylococcus aureus (strain JH9)</name>
    <dbReference type="NCBI Taxonomy" id="359786"/>
    <lineage>
        <taxon>Bacteria</taxon>
        <taxon>Bacillati</taxon>
        <taxon>Bacillota</taxon>
        <taxon>Bacilli</taxon>
        <taxon>Bacillales</taxon>
        <taxon>Staphylococcaceae</taxon>
        <taxon>Staphylococcus</taxon>
    </lineage>
</organism>
<feature type="chain" id="PRO_1000076113" description="Elongation factor Tu">
    <location>
        <begin position="1"/>
        <end position="394"/>
    </location>
</feature>
<feature type="domain" description="tr-type G">
    <location>
        <begin position="10"/>
        <end position="204"/>
    </location>
</feature>
<feature type="region of interest" description="G1" evidence="1">
    <location>
        <begin position="19"/>
        <end position="26"/>
    </location>
</feature>
<feature type="region of interest" description="G2" evidence="1">
    <location>
        <begin position="60"/>
        <end position="64"/>
    </location>
</feature>
<feature type="region of interest" description="G3" evidence="1">
    <location>
        <begin position="81"/>
        <end position="84"/>
    </location>
</feature>
<feature type="region of interest" description="G4" evidence="1">
    <location>
        <begin position="136"/>
        <end position="139"/>
    </location>
</feature>
<feature type="region of interest" description="G5" evidence="1">
    <location>
        <begin position="174"/>
        <end position="176"/>
    </location>
</feature>
<feature type="binding site" evidence="2">
    <location>
        <begin position="19"/>
        <end position="26"/>
    </location>
    <ligand>
        <name>GTP</name>
        <dbReference type="ChEBI" id="CHEBI:37565"/>
    </ligand>
</feature>
<feature type="binding site" evidence="2">
    <location>
        <position position="26"/>
    </location>
    <ligand>
        <name>Mg(2+)</name>
        <dbReference type="ChEBI" id="CHEBI:18420"/>
    </ligand>
</feature>
<feature type="binding site" evidence="2">
    <location>
        <begin position="81"/>
        <end position="85"/>
    </location>
    <ligand>
        <name>GTP</name>
        <dbReference type="ChEBI" id="CHEBI:37565"/>
    </ligand>
</feature>
<feature type="binding site" evidence="2">
    <location>
        <begin position="136"/>
        <end position="139"/>
    </location>
    <ligand>
        <name>GTP</name>
        <dbReference type="ChEBI" id="CHEBI:37565"/>
    </ligand>
</feature>
<sequence length="394" mass="43104">MAKEKFDRSKEHANIGTIGHVDHGKTTLTAAIATVLAKNGDSVAQSYDMIDNAPEEKERGITINTSHIEYQTDKRHYAHVDCPGHADYVKNMITGAAQMDGGILVVSAADGPMPQTREHILLSRNVGVPALVVFLNKVDMVDDEELLELVEMEVRDLLSEYDFPGDDVPVIAGSALKALEGDAQYEEKILELMEAVDTYIPTPERDSDKPFMMPVEDVFSITGRGTVATGRVERGQIKVGEEVEIIGLHDTSKTTVTGVEMFRKLLDYAEAGDNIGALLRGVAREDVQRGQVLAAPGSITPHTEFKAEVYVLSKDEGGRHTPFFSNYRPQFYFRTTDVTGVVHLPEGTEMVMPGDNVEMTVELIAPIAIEDGTRFSIREGGRTVGSGVVTEIIK</sequence>
<comment type="function">
    <text evidence="2">GTP hydrolase that promotes the GTP-dependent binding of aminoacyl-tRNA to the A-site of ribosomes during protein biosynthesis.</text>
</comment>
<comment type="catalytic activity">
    <reaction evidence="2">
        <text>GTP + H2O = GDP + phosphate + H(+)</text>
        <dbReference type="Rhea" id="RHEA:19669"/>
        <dbReference type="ChEBI" id="CHEBI:15377"/>
        <dbReference type="ChEBI" id="CHEBI:15378"/>
        <dbReference type="ChEBI" id="CHEBI:37565"/>
        <dbReference type="ChEBI" id="CHEBI:43474"/>
        <dbReference type="ChEBI" id="CHEBI:58189"/>
        <dbReference type="EC" id="3.6.5.3"/>
    </reaction>
    <physiologicalReaction direction="left-to-right" evidence="2">
        <dbReference type="Rhea" id="RHEA:19670"/>
    </physiologicalReaction>
</comment>
<comment type="subunit">
    <text evidence="2">Monomer.</text>
</comment>
<comment type="subcellular location">
    <subcellularLocation>
        <location evidence="2">Cytoplasm</location>
    </subcellularLocation>
</comment>
<comment type="similarity">
    <text evidence="2">Belongs to the TRAFAC class translation factor GTPase superfamily. Classic translation factor GTPase family. EF-Tu/EF-1A subfamily.</text>
</comment>
<protein>
    <recommendedName>
        <fullName evidence="2">Elongation factor Tu</fullName>
        <shortName evidence="2">EF-Tu</shortName>
        <ecNumber evidence="2">3.6.5.3</ecNumber>
    </recommendedName>
</protein>
<reference key="1">
    <citation type="submission" date="2007-05" db="EMBL/GenBank/DDBJ databases">
        <title>Complete sequence of chromosome of Staphylococcus aureus subsp. aureus JH9.</title>
        <authorList>
            <consortium name="US DOE Joint Genome Institute"/>
            <person name="Copeland A."/>
            <person name="Lucas S."/>
            <person name="Lapidus A."/>
            <person name="Barry K."/>
            <person name="Detter J.C."/>
            <person name="Glavina del Rio T."/>
            <person name="Hammon N."/>
            <person name="Israni S."/>
            <person name="Pitluck S."/>
            <person name="Chain P."/>
            <person name="Malfatti S."/>
            <person name="Shin M."/>
            <person name="Vergez L."/>
            <person name="Schmutz J."/>
            <person name="Larimer F."/>
            <person name="Land M."/>
            <person name="Hauser L."/>
            <person name="Kyrpides N."/>
            <person name="Kim E."/>
            <person name="Tomasz A."/>
            <person name="Richardson P."/>
        </authorList>
    </citation>
    <scope>NUCLEOTIDE SEQUENCE [LARGE SCALE GENOMIC DNA]</scope>
    <source>
        <strain>JH9</strain>
    </source>
</reference>
<keyword id="KW-0963">Cytoplasm</keyword>
<keyword id="KW-0251">Elongation factor</keyword>
<keyword id="KW-0342">GTP-binding</keyword>
<keyword id="KW-0378">Hydrolase</keyword>
<keyword id="KW-0460">Magnesium</keyword>
<keyword id="KW-0479">Metal-binding</keyword>
<keyword id="KW-0547">Nucleotide-binding</keyword>
<keyword id="KW-0648">Protein biosynthesis</keyword>
<name>EFTU_STAA9</name>
<gene>
    <name evidence="2" type="primary">tuf</name>
    <name type="ordered locus">SaurJH9_0571</name>
</gene>
<proteinExistence type="inferred from homology"/>
<accession>A5IQA2</accession>
<evidence type="ECO:0000250" key="1"/>
<evidence type="ECO:0000255" key="2">
    <source>
        <dbReference type="HAMAP-Rule" id="MF_00118"/>
    </source>
</evidence>